<proteinExistence type="inferred from homology"/>
<accession>B1VIS5</accession>
<keyword id="KW-0963">Cytoplasm</keyword>
<keyword id="KW-0238">DNA-binding</keyword>
<keyword id="KW-1185">Reference proteome</keyword>
<evidence type="ECO:0000255" key="1">
    <source>
        <dbReference type="HAMAP-Rule" id="MF_00274"/>
    </source>
</evidence>
<protein>
    <recommendedName>
        <fullName evidence="1">Nucleoid-associated protein cu1912</fullName>
    </recommendedName>
</protein>
<dbReference type="EMBL" id="AM942444">
    <property type="protein sequence ID" value="CAQ05871.1"/>
    <property type="molecule type" value="Genomic_DNA"/>
</dbReference>
<dbReference type="RefSeq" id="WP_012361145.1">
    <property type="nucleotide sequence ID" value="NC_010545.1"/>
</dbReference>
<dbReference type="SMR" id="B1VIS5"/>
<dbReference type="STRING" id="504474.cu1912"/>
<dbReference type="GeneID" id="60604691"/>
<dbReference type="KEGG" id="cur:cu1912"/>
<dbReference type="eggNOG" id="COG0718">
    <property type="taxonomic scope" value="Bacteria"/>
</dbReference>
<dbReference type="HOGENOM" id="CLU_140930_4_1_11"/>
<dbReference type="Proteomes" id="UP000001727">
    <property type="component" value="Chromosome"/>
</dbReference>
<dbReference type="GO" id="GO:0043590">
    <property type="term" value="C:bacterial nucleoid"/>
    <property type="evidence" value="ECO:0007669"/>
    <property type="project" value="UniProtKB-UniRule"/>
</dbReference>
<dbReference type="GO" id="GO:0005829">
    <property type="term" value="C:cytosol"/>
    <property type="evidence" value="ECO:0007669"/>
    <property type="project" value="TreeGrafter"/>
</dbReference>
<dbReference type="GO" id="GO:0003677">
    <property type="term" value="F:DNA binding"/>
    <property type="evidence" value="ECO:0007669"/>
    <property type="project" value="UniProtKB-UniRule"/>
</dbReference>
<dbReference type="Gene3D" id="3.30.1310.10">
    <property type="entry name" value="Nucleoid-associated protein YbaB-like domain"/>
    <property type="match status" value="1"/>
</dbReference>
<dbReference type="HAMAP" id="MF_00274">
    <property type="entry name" value="DNA_YbaB_EbfC"/>
    <property type="match status" value="1"/>
</dbReference>
<dbReference type="InterPro" id="IPR036894">
    <property type="entry name" value="YbaB-like_sf"/>
</dbReference>
<dbReference type="InterPro" id="IPR004401">
    <property type="entry name" value="YbaB/EbfC"/>
</dbReference>
<dbReference type="NCBIfam" id="TIGR00103">
    <property type="entry name" value="DNA_YbaB_EbfC"/>
    <property type="match status" value="1"/>
</dbReference>
<dbReference type="PANTHER" id="PTHR33449">
    <property type="entry name" value="NUCLEOID-ASSOCIATED PROTEIN YBAB"/>
    <property type="match status" value="1"/>
</dbReference>
<dbReference type="PANTHER" id="PTHR33449:SF1">
    <property type="entry name" value="NUCLEOID-ASSOCIATED PROTEIN YBAB"/>
    <property type="match status" value="1"/>
</dbReference>
<dbReference type="Pfam" id="PF02575">
    <property type="entry name" value="YbaB_DNA_bd"/>
    <property type="match status" value="1"/>
</dbReference>
<dbReference type="PIRSF" id="PIRSF004555">
    <property type="entry name" value="UCP004555"/>
    <property type="match status" value="1"/>
</dbReference>
<dbReference type="SUPFAM" id="SSF82607">
    <property type="entry name" value="YbaB-like"/>
    <property type="match status" value="1"/>
</dbReference>
<name>Y1912_CORU7</name>
<feature type="chain" id="PRO_1000114606" description="Nucleoid-associated protein cu1912">
    <location>
        <begin position="1"/>
        <end position="105"/>
    </location>
</feature>
<reference key="1">
    <citation type="journal article" date="2008" name="J. Biotechnol.">
        <title>The lifestyle of Corynebacterium urealyticum derived from its complete genome sequence established by pyrosequencing.</title>
        <authorList>
            <person name="Tauch A."/>
            <person name="Trost E."/>
            <person name="Tilker A."/>
            <person name="Ludewig U."/>
            <person name="Schneiker S."/>
            <person name="Goesmann A."/>
            <person name="Arnold W."/>
            <person name="Bekel T."/>
            <person name="Brinkrolf K."/>
            <person name="Brune I."/>
            <person name="Goetker S."/>
            <person name="Kalinowski J."/>
            <person name="Kamp P.-B."/>
            <person name="Lobo F.P."/>
            <person name="Viehoever P."/>
            <person name="Weisshaar B."/>
            <person name="Soriano F."/>
            <person name="Droege M."/>
            <person name="Puehler A."/>
        </authorList>
    </citation>
    <scope>NUCLEOTIDE SEQUENCE [LARGE SCALE GENOMIC DNA]</scope>
    <source>
        <strain>ATCC 43042 / DSM 7109</strain>
    </source>
</reference>
<gene>
    <name type="ordered locus">cu1912</name>
</gene>
<comment type="function">
    <text evidence="1">Binds to DNA and alters its conformation. May be involved in regulation of gene expression, nucleoid organization and DNA protection.</text>
</comment>
<comment type="subunit">
    <text evidence="1">Homodimer.</text>
</comment>
<comment type="subcellular location">
    <subcellularLocation>
        <location evidence="1">Cytoplasm</location>
        <location evidence="1">Nucleoid</location>
    </subcellularLocation>
</comment>
<comment type="similarity">
    <text evidence="1">Belongs to the YbaB/EbfC family.</text>
</comment>
<sequence length="105" mass="11136">MSQPNMNDIMAQAQRMQKQLQEAQAEIVASSIVGEAGNGKVTLVLSGGGEVQDLKIDQEVVDPEDVETLQDLIIGAFQDANQKLQDLAQEKMGPLADLGGGGLPF</sequence>
<organism>
    <name type="scientific">Corynebacterium urealyticum (strain ATCC 43042 / DSM 7109)</name>
    <dbReference type="NCBI Taxonomy" id="504474"/>
    <lineage>
        <taxon>Bacteria</taxon>
        <taxon>Bacillati</taxon>
        <taxon>Actinomycetota</taxon>
        <taxon>Actinomycetes</taxon>
        <taxon>Mycobacteriales</taxon>
        <taxon>Corynebacteriaceae</taxon>
        <taxon>Corynebacterium</taxon>
    </lineage>
</organism>